<dbReference type="EMBL" id="L77117">
    <property type="protein sequence ID" value="AAB98409.1"/>
    <property type="molecule type" value="Genomic_DNA"/>
</dbReference>
<dbReference type="PIR" id="E64352">
    <property type="entry name" value="E64352"/>
</dbReference>
<dbReference type="RefSeq" id="WP_010869920.1">
    <property type="nucleotide sequence ID" value="NC_000909.1"/>
</dbReference>
<dbReference type="SMR" id="Q57864"/>
<dbReference type="STRING" id="243232.MJ_0421"/>
<dbReference type="PaxDb" id="243232-MJ_0421"/>
<dbReference type="EnsemblBacteria" id="AAB98409">
    <property type="protein sequence ID" value="AAB98409"/>
    <property type="gene ID" value="MJ_0421"/>
</dbReference>
<dbReference type="GeneID" id="1451281"/>
<dbReference type="KEGG" id="mja:MJ_0421"/>
<dbReference type="eggNOG" id="arCOG00056">
    <property type="taxonomic scope" value="Archaea"/>
</dbReference>
<dbReference type="HOGENOM" id="CLU_795999_0_0_2"/>
<dbReference type="InParanoid" id="Q57864"/>
<dbReference type="OrthoDB" id="64018at2157"/>
<dbReference type="PhylomeDB" id="Q57864"/>
<dbReference type="Proteomes" id="UP000000805">
    <property type="component" value="Chromosome"/>
</dbReference>
<dbReference type="GO" id="GO:0003723">
    <property type="term" value="F:RNA binding"/>
    <property type="evidence" value="ECO:0007669"/>
    <property type="project" value="InterPro"/>
</dbReference>
<dbReference type="GO" id="GO:0016423">
    <property type="term" value="F:tRNA (guanine) methyltransferase activity"/>
    <property type="evidence" value="ECO:0000318"/>
    <property type="project" value="GO_Central"/>
</dbReference>
<dbReference type="GO" id="GO:0030488">
    <property type="term" value="P:tRNA methylation"/>
    <property type="evidence" value="ECO:0000318"/>
    <property type="project" value="GO_Central"/>
</dbReference>
<dbReference type="CDD" id="cd11718">
    <property type="entry name" value="THUMP_SPOUT"/>
    <property type="match status" value="1"/>
</dbReference>
<dbReference type="FunFam" id="3.30.2130.30:FF:000020">
    <property type="entry name" value="RNA-binding protein, containing THUMP domain"/>
    <property type="match status" value="1"/>
</dbReference>
<dbReference type="Gene3D" id="3.30.2130.30">
    <property type="match status" value="1"/>
</dbReference>
<dbReference type="InterPro" id="IPR029028">
    <property type="entry name" value="Alpha/beta_knot_MTases"/>
</dbReference>
<dbReference type="InterPro" id="IPR041730">
    <property type="entry name" value="MJ0421-like_THUMP"/>
</dbReference>
<dbReference type="InterPro" id="IPR025849">
    <property type="entry name" value="SPOUT_MTase_fused_to_THUMP"/>
</dbReference>
<dbReference type="InterPro" id="IPR004114">
    <property type="entry name" value="THUMP_dom"/>
</dbReference>
<dbReference type="InterPro" id="IPR050102">
    <property type="entry name" value="tRNA_sulfurtransferase_ThiI"/>
</dbReference>
<dbReference type="PANTHER" id="PTHR43209">
    <property type="entry name" value="TRNA SULFURTRANSFERASE"/>
    <property type="match status" value="1"/>
</dbReference>
<dbReference type="PANTHER" id="PTHR43209:SF1">
    <property type="entry name" value="TRNA SULFURTRANSFERASE"/>
    <property type="match status" value="1"/>
</dbReference>
<dbReference type="Pfam" id="PF14419">
    <property type="entry name" value="SPOUT_MTase_2"/>
    <property type="match status" value="1"/>
</dbReference>
<dbReference type="Pfam" id="PF02926">
    <property type="entry name" value="THUMP"/>
    <property type="match status" value="1"/>
</dbReference>
<dbReference type="SMART" id="SM00981">
    <property type="entry name" value="THUMP"/>
    <property type="match status" value="1"/>
</dbReference>
<dbReference type="SUPFAM" id="SSF75217">
    <property type="entry name" value="alpha/beta knot"/>
    <property type="match status" value="1"/>
</dbReference>
<dbReference type="SUPFAM" id="SSF143437">
    <property type="entry name" value="THUMP domain-like"/>
    <property type="match status" value="1"/>
</dbReference>
<dbReference type="PROSITE" id="PS51165">
    <property type="entry name" value="THUMP"/>
    <property type="match status" value="1"/>
</dbReference>
<keyword id="KW-1185">Reference proteome</keyword>
<gene>
    <name type="ordered locus">MJ0421</name>
</gene>
<evidence type="ECO:0000255" key="1">
    <source>
        <dbReference type="PROSITE-ProRule" id="PRU00529"/>
    </source>
</evidence>
<proteinExistence type="predicted"/>
<sequence length="360" mass="41397">MKFIIKTQKGFENIVVNNLKEIVDDFNYIVSPDGYQGIVIVESDEDIEDKILQIPEVERVLKVYFETETDFDKIVNLAEKIKDYIKEDETFAVETKKRGKHDFSSTDINIVLGAKIKDLTNASVDLNNPDKVVHVEVFKNKTYVSITPGEKFKKYTKEKRNARELFKKVVIVQMPYLGEKIVCKRFGEAIGRAAQGFEVKELIIAPKEKVDAYELMEFIKGVKIGQHSRYEIQKRAYPFEIKLVPVTVQDLYQVVRDKRRDNRLLIITDPKGDELSKIKDKLAYDLRKKREIIVFCGSREGIPRGLFRFADYIVDLAPHMTFATEHAIPAALIALWGVYSGEDLENSSKEEKTESNSNGE</sequence>
<feature type="chain" id="PRO_0000106867" description="Uncharacterized protein MJ0421">
    <location>
        <begin position="1"/>
        <end position="360"/>
    </location>
</feature>
<feature type="domain" description="THUMP" evidence="1">
    <location>
        <begin position="45"/>
        <end position="148"/>
    </location>
</feature>
<name>Y421_METJA</name>
<organism>
    <name type="scientific">Methanocaldococcus jannaschii (strain ATCC 43067 / DSM 2661 / JAL-1 / JCM 10045 / NBRC 100440)</name>
    <name type="common">Methanococcus jannaschii</name>
    <dbReference type="NCBI Taxonomy" id="243232"/>
    <lineage>
        <taxon>Archaea</taxon>
        <taxon>Methanobacteriati</taxon>
        <taxon>Methanobacteriota</taxon>
        <taxon>Methanomada group</taxon>
        <taxon>Methanococci</taxon>
        <taxon>Methanococcales</taxon>
        <taxon>Methanocaldococcaceae</taxon>
        <taxon>Methanocaldococcus</taxon>
    </lineage>
</organism>
<reference key="1">
    <citation type="journal article" date="1996" name="Science">
        <title>Complete genome sequence of the methanogenic archaeon, Methanococcus jannaschii.</title>
        <authorList>
            <person name="Bult C.J."/>
            <person name="White O."/>
            <person name="Olsen G.J."/>
            <person name="Zhou L."/>
            <person name="Fleischmann R.D."/>
            <person name="Sutton G.G."/>
            <person name="Blake J.A."/>
            <person name="FitzGerald L.M."/>
            <person name="Clayton R.A."/>
            <person name="Gocayne J.D."/>
            <person name="Kerlavage A.R."/>
            <person name="Dougherty B.A."/>
            <person name="Tomb J.-F."/>
            <person name="Adams M.D."/>
            <person name="Reich C.I."/>
            <person name="Overbeek R."/>
            <person name="Kirkness E.F."/>
            <person name="Weinstock K.G."/>
            <person name="Merrick J.M."/>
            <person name="Glodek A."/>
            <person name="Scott J.L."/>
            <person name="Geoghagen N.S.M."/>
            <person name="Weidman J.F."/>
            <person name="Fuhrmann J.L."/>
            <person name="Nguyen D."/>
            <person name="Utterback T.R."/>
            <person name="Kelley J.M."/>
            <person name="Peterson J.D."/>
            <person name="Sadow P.W."/>
            <person name="Hanna M.C."/>
            <person name="Cotton M.D."/>
            <person name="Roberts K.M."/>
            <person name="Hurst M.A."/>
            <person name="Kaine B.P."/>
            <person name="Borodovsky M."/>
            <person name="Klenk H.-P."/>
            <person name="Fraser C.M."/>
            <person name="Smith H.O."/>
            <person name="Woese C.R."/>
            <person name="Venter J.C."/>
        </authorList>
    </citation>
    <scope>NUCLEOTIDE SEQUENCE [LARGE SCALE GENOMIC DNA]</scope>
    <source>
        <strain>ATCC 43067 / DSM 2661 / JAL-1 / JCM 10045 / NBRC 100440</strain>
    </source>
</reference>
<accession>Q57864</accession>
<protein>
    <recommendedName>
        <fullName>Uncharacterized protein MJ0421</fullName>
    </recommendedName>
</protein>